<gene>
    <name evidence="1" type="primary">arcA</name>
    <name type="ordered locus">MARTH_orf873</name>
</gene>
<sequence length="409" mass="46068">MSVFDSKFKGIHVYSEIGELETVLVHEPGKEIDYITPARLDELLFSAILESHDARKEHKEFVAELKKRGINVVELVDLIVETYDLASKEAKEKLLEEFLDDSVPVLSDEHRAAVKKFLQSQKSTRSLVEYMIAGITKHDLKIESDLELIVDPMPNLYFTRDPFASVGNGVTIHYMRYKVRQRETLFSRFVFSNHPKLVNTPWYYDPAEGLSIEGGDVFIYNNDTLVVGVSERTDLQTITLLAKNIKANKECEFKRIVAINVPKWTNLMHLDTWLTMLDKDKFLYSPIANDVFKFWDYDLVNGGDAPQPVDNGLPLEDLLKSIIGKKPTLIPIAGAGASQIDIERETHFDGTNYLAVAPGIVIGYARNEKTNAALEAAGITVLPFRGNQLSLGMGNARCMSMPLSRKDVK</sequence>
<feature type="chain" id="PRO_1000100740" description="Arginine deiminase">
    <location>
        <begin position="1"/>
        <end position="409"/>
    </location>
</feature>
<feature type="active site" description="Amidino-cysteine intermediate" evidence="1">
    <location>
        <position position="398"/>
    </location>
</feature>
<evidence type="ECO:0000255" key="1">
    <source>
        <dbReference type="HAMAP-Rule" id="MF_00242"/>
    </source>
</evidence>
<protein>
    <recommendedName>
        <fullName evidence="1">Arginine deiminase</fullName>
        <shortName evidence="1">ADI</shortName>
        <ecNumber evidence="1">3.5.3.6</ecNumber>
    </recommendedName>
    <alternativeName>
        <fullName evidence="1">Arginine dihydrolase</fullName>
        <shortName evidence="1">AD</shortName>
    </alternativeName>
</protein>
<comment type="catalytic activity">
    <reaction evidence="1">
        <text>L-arginine + H2O = L-citrulline + NH4(+)</text>
        <dbReference type="Rhea" id="RHEA:19597"/>
        <dbReference type="ChEBI" id="CHEBI:15377"/>
        <dbReference type="ChEBI" id="CHEBI:28938"/>
        <dbReference type="ChEBI" id="CHEBI:32682"/>
        <dbReference type="ChEBI" id="CHEBI:57743"/>
        <dbReference type="EC" id="3.5.3.6"/>
    </reaction>
</comment>
<comment type="pathway">
    <text evidence="1">Amino-acid degradation; L-arginine degradation via ADI pathway; carbamoyl phosphate from L-arginine: step 1/2.</text>
</comment>
<comment type="subcellular location">
    <subcellularLocation>
        <location evidence="1">Cytoplasm</location>
    </subcellularLocation>
</comment>
<comment type="similarity">
    <text evidence="1">Belongs to the arginine deiminase family.</text>
</comment>
<reference key="1">
    <citation type="journal article" date="2008" name="Infect. Immun.">
        <title>Genome of Mycoplasma arthritidis.</title>
        <authorList>
            <person name="Dybvig K."/>
            <person name="Zuhua C."/>
            <person name="Lao P."/>
            <person name="Jordan D.S."/>
            <person name="French C.T."/>
            <person name="Tu A.H."/>
            <person name="Loraine A.E."/>
        </authorList>
    </citation>
    <scope>NUCLEOTIDE SEQUENCE [LARGE SCALE GENOMIC DNA]</scope>
    <source>
        <strain>158L3-1</strain>
    </source>
</reference>
<name>ARCA_META1</name>
<proteinExistence type="inferred from homology"/>
<accession>B3PNI8</accession>
<keyword id="KW-0056">Arginine metabolism</keyword>
<keyword id="KW-0963">Cytoplasm</keyword>
<keyword id="KW-0378">Hydrolase</keyword>
<keyword id="KW-1185">Reference proteome</keyword>
<organism>
    <name type="scientific">Metamycoplasma arthritidis (strain 158L3-1)</name>
    <name type="common">Mycoplasma arthritidis</name>
    <dbReference type="NCBI Taxonomy" id="243272"/>
    <lineage>
        <taxon>Bacteria</taxon>
        <taxon>Bacillati</taxon>
        <taxon>Mycoplasmatota</taxon>
        <taxon>Mycoplasmoidales</taxon>
        <taxon>Metamycoplasmataceae</taxon>
        <taxon>Metamycoplasma</taxon>
    </lineage>
</organism>
<dbReference type="EC" id="3.5.3.6" evidence="1"/>
<dbReference type="EMBL" id="CP001047">
    <property type="protein sequence ID" value="ACF07590.1"/>
    <property type="molecule type" value="Genomic_DNA"/>
</dbReference>
<dbReference type="RefSeq" id="WP_012498547.1">
    <property type="nucleotide sequence ID" value="NC_011025.1"/>
</dbReference>
<dbReference type="SMR" id="B3PNI8"/>
<dbReference type="STRING" id="243272.MARTH_orf873"/>
<dbReference type="KEGG" id="mat:MARTH_orf873"/>
<dbReference type="eggNOG" id="COG2235">
    <property type="taxonomic scope" value="Bacteria"/>
</dbReference>
<dbReference type="HOGENOM" id="CLU_052662_0_1_14"/>
<dbReference type="UniPathway" id="UPA00254">
    <property type="reaction ID" value="UER00364"/>
</dbReference>
<dbReference type="Proteomes" id="UP000008812">
    <property type="component" value="Chromosome"/>
</dbReference>
<dbReference type="GO" id="GO:0005737">
    <property type="term" value="C:cytoplasm"/>
    <property type="evidence" value="ECO:0007669"/>
    <property type="project" value="UniProtKB-SubCell"/>
</dbReference>
<dbReference type="GO" id="GO:0016990">
    <property type="term" value="F:arginine deiminase activity"/>
    <property type="evidence" value="ECO:0007669"/>
    <property type="project" value="UniProtKB-UniRule"/>
</dbReference>
<dbReference type="GO" id="GO:0019547">
    <property type="term" value="P:arginine catabolic process to ornithine"/>
    <property type="evidence" value="ECO:0007669"/>
    <property type="project" value="UniProtKB-UniRule"/>
</dbReference>
<dbReference type="GO" id="GO:0019546">
    <property type="term" value="P:arginine deiminase pathway"/>
    <property type="evidence" value="ECO:0007669"/>
    <property type="project" value="TreeGrafter"/>
</dbReference>
<dbReference type="Gene3D" id="1.10.3930.10">
    <property type="entry name" value="Arginine deiminase"/>
    <property type="match status" value="1"/>
</dbReference>
<dbReference type="Gene3D" id="3.75.10.10">
    <property type="entry name" value="L-arginine/glycine Amidinotransferase, Chain A"/>
    <property type="match status" value="1"/>
</dbReference>
<dbReference type="HAMAP" id="MF_00242">
    <property type="entry name" value="Arg_deiminase"/>
    <property type="match status" value="1"/>
</dbReference>
<dbReference type="InterPro" id="IPR003876">
    <property type="entry name" value="Arg_deiminase"/>
</dbReference>
<dbReference type="NCBIfam" id="TIGR01078">
    <property type="entry name" value="arcA"/>
    <property type="match status" value="1"/>
</dbReference>
<dbReference type="PANTHER" id="PTHR47271">
    <property type="entry name" value="ARGININE DEIMINASE"/>
    <property type="match status" value="1"/>
</dbReference>
<dbReference type="PANTHER" id="PTHR47271:SF2">
    <property type="entry name" value="ARGININE DEIMINASE"/>
    <property type="match status" value="1"/>
</dbReference>
<dbReference type="Pfam" id="PF02274">
    <property type="entry name" value="ADI"/>
    <property type="match status" value="1"/>
</dbReference>
<dbReference type="PIRSF" id="PIRSF006356">
    <property type="entry name" value="Arg_deiminase"/>
    <property type="match status" value="1"/>
</dbReference>
<dbReference type="PRINTS" id="PR01466">
    <property type="entry name" value="ARGDEIMINASE"/>
</dbReference>
<dbReference type="SUPFAM" id="SSF55909">
    <property type="entry name" value="Pentein"/>
    <property type="match status" value="1"/>
</dbReference>